<name>EASE_ARTOC</name>
<dbReference type="EC" id="1.-.-.-" evidence="5"/>
<dbReference type="EMBL" id="DS995705">
    <property type="protein sequence ID" value="EEQ33235.1"/>
    <property type="molecule type" value="Genomic_DNA"/>
</dbReference>
<dbReference type="RefSeq" id="XP_002846185.1">
    <property type="nucleotide sequence ID" value="XM_002846139.1"/>
</dbReference>
<dbReference type="SMR" id="C5FTN2"/>
<dbReference type="STRING" id="554155.C5FTN2"/>
<dbReference type="GeneID" id="9227067"/>
<dbReference type="VEuPathDB" id="FungiDB:MCYG_06054"/>
<dbReference type="eggNOG" id="ENOG502R8I5">
    <property type="taxonomic scope" value="Eukaryota"/>
</dbReference>
<dbReference type="HOGENOM" id="CLU_018354_4_4_1"/>
<dbReference type="OMA" id="CHQGRIP"/>
<dbReference type="OrthoDB" id="9983560at2759"/>
<dbReference type="UniPathway" id="UPA00327"/>
<dbReference type="Proteomes" id="UP000002035">
    <property type="component" value="Unassembled WGS sequence"/>
</dbReference>
<dbReference type="GO" id="GO:0071949">
    <property type="term" value="F:FAD binding"/>
    <property type="evidence" value="ECO:0007669"/>
    <property type="project" value="InterPro"/>
</dbReference>
<dbReference type="GO" id="GO:0016491">
    <property type="term" value="F:oxidoreductase activity"/>
    <property type="evidence" value="ECO:0007669"/>
    <property type="project" value="UniProtKB-KW"/>
</dbReference>
<dbReference type="GO" id="GO:0035835">
    <property type="term" value="P:indole alkaloid biosynthetic process"/>
    <property type="evidence" value="ECO:0007669"/>
    <property type="project" value="UniProtKB-UniPathway"/>
</dbReference>
<dbReference type="Gene3D" id="3.30.465.10">
    <property type="match status" value="2"/>
</dbReference>
<dbReference type="InterPro" id="IPR012951">
    <property type="entry name" value="BBE"/>
</dbReference>
<dbReference type="InterPro" id="IPR016166">
    <property type="entry name" value="FAD-bd_PCMH"/>
</dbReference>
<dbReference type="InterPro" id="IPR036318">
    <property type="entry name" value="FAD-bd_PCMH-like_sf"/>
</dbReference>
<dbReference type="InterPro" id="IPR016169">
    <property type="entry name" value="FAD-bd_PCMH_sub2"/>
</dbReference>
<dbReference type="InterPro" id="IPR050416">
    <property type="entry name" value="FAD-linked_Oxidoreductase"/>
</dbReference>
<dbReference type="InterPro" id="IPR006094">
    <property type="entry name" value="Oxid_FAD_bind_N"/>
</dbReference>
<dbReference type="PANTHER" id="PTHR42973">
    <property type="entry name" value="BINDING OXIDOREDUCTASE, PUTATIVE (AFU_ORTHOLOGUE AFUA_1G17690)-RELATED"/>
    <property type="match status" value="1"/>
</dbReference>
<dbReference type="PANTHER" id="PTHR42973:SF39">
    <property type="entry name" value="FAD-BINDING PCMH-TYPE DOMAIN-CONTAINING PROTEIN"/>
    <property type="match status" value="1"/>
</dbReference>
<dbReference type="Pfam" id="PF08031">
    <property type="entry name" value="BBE"/>
    <property type="match status" value="1"/>
</dbReference>
<dbReference type="Pfam" id="PF01565">
    <property type="entry name" value="FAD_binding_4"/>
    <property type="match status" value="1"/>
</dbReference>
<dbReference type="SUPFAM" id="SSF56176">
    <property type="entry name" value="FAD-binding/transporter-associated domain-like"/>
    <property type="match status" value="1"/>
</dbReference>
<dbReference type="PROSITE" id="PS51387">
    <property type="entry name" value="FAD_PCMH"/>
    <property type="match status" value="1"/>
</dbReference>
<comment type="function">
    <text evidence="2">FAD-linked oxidoreductase; part of the gene cluster that mediates the biosynthesis of fungal ergot alkaloid (PubMed:22403186). DmaW catalyzes the first step of ergot alkaloid biosynthesis by condensing dimethylallyl diphosphate (DMAP) and tryptophan to form 4-dimethylallyl-L-tryptophan (PubMed:22403186). The second step is catalyzed by the methyltransferase easF that methylates 4-dimethylallyl-L-tryptophan in the presence of S-adenosyl-L-methionine, resulting in the formation of 4-dimethylallyl-L-abrine (PubMed:22403186). The catalase easC and the FAD-dependent oxidoreductase easE then transform 4-dimethylallyl-L-abrine to chanoclavine-I which is further oxidized by easD in the presence of NAD(+), resulting in the formation of chanoclavine-I aldehyde (PubMed:22403186). Chanoclavine-I aldehyde is the precursor of ergoamides and ergopeptines in Clavicipitaceae, and clavine-type alcaloids such as fumiclavine in Trichocomaceae (PubMed:22403186). However, the metabolites downstream of chanoclavine-I aldehyde in Arthrodermataceae have not been identified yet (PubMed:22403186).</text>
</comment>
<comment type="cofactor">
    <cofactor evidence="4">
        <name>FAD</name>
        <dbReference type="ChEBI" id="CHEBI:57692"/>
    </cofactor>
</comment>
<comment type="pathway">
    <text evidence="5">Alkaloid biosynthesis; ergot alkaloid biosynthesis.</text>
</comment>
<comment type="similarity">
    <text evidence="4">Belongs to the oxygen-dependent FAD-linked oxidoreductase family.</text>
</comment>
<accession>C5FTN2</accession>
<evidence type="ECO:0000255" key="1">
    <source>
        <dbReference type="PROSITE-ProRule" id="PRU00718"/>
    </source>
</evidence>
<evidence type="ECO:0000269" key="2">
    <source>
    </source>
</evidence>
<evidence type="ECO:0000303" key="3">
    <source>
    </source>
</evidence>
<evidence type="ECO:0000305" key="4"/>
<evidence type="ECO:0000305" key="5">
    <source>
    </source>
</evidence>
<feature type="chain" id="PRO_0000439135" description="FAD-linked oxidoreductase easE">
    <location>
        <begin position="1"/>
        <end position="612"/>
    </location>
</feature>
<feature type="domain" description="FAD-binding PCMH-type" evidence="1">
    <location>
        <begin position="129"/>
        <end position="313"/>
    </location>
</feature>
<organism>
    <name type="scientific">Arthroderma otae (strain ATCC MYA-4605 / CBS 113480)</name>
    <name type="common">Microsporum canis</name>
    <dbReference type="NCBI Taxonomy" id="554155"/>
    <lineage>
        <taxon>Eukaryota</taxon>
        <taxon>Fungi</taxon>
        <taxon>Dikarya</taxon>
        <taxon>Ascomycota</taxon>
        <taxon>Pezizomycotina</taxon>
        <taxon>Eurotiomycetes</taxon>
        <taxon>Eurotiomycetidae</taxon>
        <taxon>Onygenales</taxon>
        <taxon>Arthrodermataceae</taxon>
        <taxon>Microsporum</taxon>
    </lineage>
</organism>
<protein>
    <recommendedName>
        <fullName evidence="3">FAD-linked oxidoreductase easE</fullName>
        <ecNumber evidence="5">1.-.-.-</ecNumber>
    </recommendedName>
    <alternativeName>
        <fullName evidence="4">Chanoclavine I synthase</fullName>
    </alternativeName>
    <alternativeName>
        <fullName evidence="3">Ergot alkaloid synthesis protein E</fullName>
    </alternativeName>
</protein>
<gene>
    <name evidence="3" type="primary">easE</name>
    <name type="ORF">MCYG_06054</name>
</gene>
<proteinExistence type="inferred from homology"/>
<keyword id="KW-0017">Alkaloid metabolism</keyword>
<keyword id="KW-0274">FAD</keyword>
<keyword id="KW-0285">Flavoprotein</keyword>
<keyword id="KW-0560">Oxidoreductase</keyword>
<keyword id="KW-1185">Reference proteome</keyword>
<sequence>MNSNSQIRSSRLIEALHAYYSKYLVVTIRPIRYLVEPWQPCWPSEELWNSFNTSIDGKLQQLKPAAHVCYEPNFDKGACDDLLRLSRDSGWRASHPGVLQDWVWEAGESANETCPMGSLQTATAAKSCHQGRIPLYSATVESAQQVQQAVRFARRHNLRLVIRNTGHDLAGRSSAPDSFQIHTHRLQETQFHTDLRLNGSTASLGPAVTVGAGVMMGNLYARAAREGYMVLGGDCPTVGVAGGFLQGGGVSDFLSLNQGLGVDNVLEYEIVTADGELLVANTLQNQELFWALRGGGGGTFGVVTRATMRVFPDVPAVISEVLLQAPQTNSSSWTEGLSVILNALQSLNRDDVGGQLVIAVQPELAVQASIKFFFLNSTETTIIDERMKSLLTDLNRIDIQYTLSSKALPHFSSNYRQVPDIHSDNDYGVIGSTVAISKELFDSSQGPQKIARALANLPMSPGDLLFTSNLGGRVISNGEIAETSMHPAWRAASQLLNYIHAVGPSIESRVNALERLTNVQMPMLYAIDPNFRLSYRNVGDPNEKDFQQVYWGSNYKRLSQIKKRWDSDGLFFSKLGVGSELWDSEGMCRKNQSVVRQAVNYLMSFATSMVEG</sequence>
<reference key="1">
    <citation type="journal article" date="2012" name="MBio">
        <title>Comparative genome analysis of Trichophyton rubrum and related dermatophytes reveals candidate genes involved in infection.</title>
        <authorList>
            <person name="Martinez D.A."/>
            <person name="Oliver B.G."/>
            <person name="Graeser Y."/>
            <person name="Goldberg J.M."/>
            <person name="Li W."/>
            <person name="Martinez-Rossi N.M."/>
            <person name="Monod M."/>
            <person name="Shelest E."/>
            <person name="Barton R.C."/>
            <person name="Birch E."/>
            <person name="Brakhage A.A."/>
            <person name="Chen Z."/>
            <person name="Gurr S.J."/>
            <person name="Heiman D."/>
            <person name="Heitman J."/>
            <person name="Kosti I."/>
            <person name="Rossi A."/>
            <person name="Saif S."/>
            <person name="Samalova M."/>
            <person name="Saunders C.W."/>
            <person name="Shea T."/>
            <person name="Summerbell R.C."/>
            <person name="Xu J."/>
            <person name="Young S."/>
            <person name="Zeng Q."/>
            <person name="Birren B.W."/>
            <person name="Cuomo C.A."/>
            <person name="White T.C."/>
        </authorList>
    </citation>
    <scope>NUCLEOTIDE SEQUENCE [LARGE SCALE GENOMIC DNA]</scope>
    <source>
        <strain>ATCC MYA-4605 / CBS 113480</strain>
    </source>
</reference>
<reference key="2">
    <citation type="journal article" date="2012" name="Microbiology">
        <title>Genome mining reveals the presence of a conserved gene cluster for the biosynthesis of ergot alkaloid precursors in the fungal family Arthrodermataceae.</title>
        <authorList>
            <person name="Wallwey C."/>
            <person name="Heddergott C."/>
            <person name="Xie X."/>
            <person name="Brakhage A.A."/>
            <person name="Li S.M."/>
        </authorList>
    </citation>
    <scope>FUNCTION</scope>
</reference>